<organism>
    <name type="scientific">Caenorhabditis elegans</name>
    <dbReference type="NCBI Taxonomy" id="6239"/>
    <lineage>
        <taxon>Eukaryota</taxon>
        <taxon>Metazoa</taxon>
        <taxon>Ecdysozoa</taxon>
        <taxon>Nematoda</taxon>
        <taxon>Chromadorea</taxon>
        <taxon>Rhabditida</taxon>
        <taxon>Rhabditina</taxon>
        <taxon>Rhabditomorpha</taxon>
        <taxon>Rhabditoidea</taxon>
        <taxon>Rhabditidae</taxon>
        <taxon>Peloderinae</taxon>
        <taxon>Caenorhabditis</taxon>
    </lineage>
</organism>
<protein>
    <recommendedName>
        <fullName>Protein FMC1 homolog</fullName>
    </recommendedName>
</protein>
<keyword id="KW-1185">Reference proteome</keyword>
<sequence>MASAVGKGVTAFNTIKNIISELKKVDKTFSPNSAQYKYLMEQMKADQVTTRRYSKAENESESVAKLYLSYIKGTRQLNELQERYKGGEKSVEEAAAIVGLKLPEQKKL</sequence>
<dbReference type="EMBL" id="FO080706">
    <property type="protein sequence ID" value="CCD66008.1"/>
    <property type="molecule type" value="Genomic_DNA"/>
</dbReference>
<dbReference type="RefSeq" id="NP_741234.1">
    <property type="nucleotide sequence ID" value="NM_171199.6"/>
</dbReference>
<dbReference type="SMR" id="Q8MNU8"/>
<dbReference type="BioGRID" id="56607">
    <property type="interactions" value="5"/>
</dbReference>
<dbReference type="FunCoup" id="Q8MNU8">
    <property type="interactions" value="1645"/>
</dbReference>
<dbReference type="STRING" id="6239.C29E4.12.1"/>
<dbReference type="PaxDb" id="6239-C29E4.12"/>
<dbReference type="PeptideAtlas" id="Q8MNU8"/>
<dbReference type="EnsemblMetazoa" id="C29E4.12.1">
    <property type="protein sequence ID" value="C29E4.12.1"/>
    <property type="gene ID" value="WBGene00016209"/>
</dbReference>
<dbReference type="GeneID" id="259333"/>
<dbReference type="KEGG" id="cel:CELE_C29E4.12"/>
<dbReference type="UCSC" id="C29E4.12">
    <property type="organism name" value="c. elegans"/>
</dbReference>
<dbReference type="AGR" id="WB:WBGene00016209"/>
<dbReference type="CTD" id="259333"/>
<dbReference type="WormBase" id="C29E4.12">
    <property type="protein sequence ID" value="CE30619"/>
    <property type="gene ID" value="WBGene00016209"/>
</dbReference>
<dbReference type="eggNOG" id="KOG2359">
    <property type="taxonomic scope" value="Eukaryota"/>
</dbReference>
<dbReference type="GeneTree" id="ENSGT00390000012258"/>
<dbReference type="HOGENOM" id="CLU_159000_1_0_1"/>
<dbReference type="InParanoid" id="Q8MNU8"/>
<dbReference type="OMA" id="QYKYLME"/>
<dbReference type="OrthoDB" id="551431at2759"/>
<dbReference type="PhylomeDB" id="Q8MNU8"/>
<dbReference type="PRO" id="PR:Q8MNU8"/>
<dbReference type="Proteomes" id="UP000001940">
    <property type="component" value="Chromosome III"/>
</dbReference>
<dbReference type="Bgee" id="WBGene00016209">
    <property type="expression patterns" value="Expressed in embryo and 3 other cell types or tissues"/>
</dbReference>
<dbReference type="GO" id="GO:0005739">
    <property type="term" value="C:mitochondrion"/>
    <property type="evidence" value="ECO:0000318"/>
    <property type="project" value="GO_Central"/>
</dbReference>
<dbReference type="InterPro" id="IPR037667">
    <property type="entry name" value="FMC1_homologue"/>
</dbReference>
<dbReference type="PANTHER" id="PTHR31716">
    <property type="entry name" value="PROTEIN FMC1 HOMOLOG"/>
    <property type="match status" value="1"/>
</dbReference>
<dbReference type="PANTHER" id="PTHR31716:SF1">
    <property type="entry name" value="PROTEIN FMC1 HOMOLOG"/>
    <property type="match status" value="1"/>
</dbReference>
<accession>Q8MNU8</accession>
<comment type="similarity">
    <text evidence="1">Belongs to the FMC1 family.</text>
</comment>
<proteinExistence type="inferred from homology"/>
<gene>
    <name type="ORF">C29E4.12</name>
</gene>
<feature type="chain" id="PRO_0000328790" description="Protein FMC1 homolog">
    <location>
        <begin position="1"/>
        <end position="108"/>
    </location>
</feature>
<evidence type="ECO:0000305" key="1"/>
<name>FMC1_CAEEL</name>
<reference key="1">
    <citation type="journal article" date="1998" name="Science">
        <title>Genome sequence of the nematode C. elegans: a platform for investigating biology.</title>
        <authorList>
            <consortium name="The C. elegans sequencing consortium"/>
        </authorList>
    </citation>
    <scope>NUCLEOTIDE SEQUENCE [LARGE SCALE GENOMIC DNA]</scope>
    <source>
        <strain>Bristol N2</strain>
    </source>
</reference>